<protein>
    <recommendedName>
        <fullName>Basic phospholipase A2 homolog 5</fullName>
        <shortName>svPLA2 homolog</shortName>
    </recommendedName>
    <alternativeName>
        <fullName>Phospholipase A2 isozyme V</fullName>
        <shortName>PLA2-V</shortName>
    </alternativeName>
</protein>
<reference key="1">
    <citation type="journal article" date="1995" name="Proc. Natl. Acad. Sci. U.S.A.">
        <title>Accelerated evolution in the protein-coding regions is universal in crotalinae snake venom gland phospholipase A2 isozyme genes.</title>
        <authorList>
            <person name="Nakashima K."/>
            <person name="Nobuhisa I."/>
            <person name="Deshimaru M."/>
            <person name="Nakai M."/>
            <person name="Ogawa T."/>
            <person name="Shimohigashi Y."/>
            <person name="Fukumaki Y."/>
            <person name="Hattori M."/>
            <person name="Sakaki Y."/>
            <person name="Hattori S."/>
            <person name="Ohno M."/>
        </authorList>
    </citation>
    <scope>NUCLEOTIDE SEQUENCE [GENOMIC DNA / MRNA]</scope>
    <source>
        <tissue>Venom gland</tissue>
    </source>
</reference>
<reference key="2">
    <citation type="journal article" date="1995" name="Toxicon">
        <title>Purification and primary structure of a myotoxic lysine-49 phospholipase A2 with low lipolytic activity from Trimeresurus gramineus venom.</title>
        <authorList>
            <person name="Nakai M."/>
            <person name="Nakashima K."/>
            <person name="Ogawa T."/>
            <person name="Shimohigashi Y."/>
            <person name="Hattori S."/>
            <person name="Chang C.-C."/>
            <person name="Ohno M."/>
        </authorList>
    </citation>
    <scope>PROTEIN SEQUENCE OF 17-138</scope>
    <scope>SUBCELLULAR LOCATION</scope>
    <source>
        <tissue>Venom</tissue>
    </source>
</reference>
<feature type="signal peptide" evidence="5">
    <location>
        <begin position="1"/>
        <end position="16"/>
    </location>
</feature>
<feature type="chain" id="PRO_0000022960" description="Basic phospholipase A2 homolog 5">
    <location>
        <begin position="17"/>
        <end position="138"/>
    </location>
</feature>
<feature type="region of interest" description="Important for membrane-damaging activities in eukaryotes and bacteria; heparin-binding" evidence="2">
    <location>
        <begin position="121"/>
        <end position="133"/>
    </location>
</feature>
<feature type="site" description="Important residue of the cationic membrane-docking site (MDoS)" evidence="1">
    <location>
        <position position="121"/>
    </location>
</feature>
<feature type="site" description="Important residue of the cationic membrane-docking site (MDoS)" evidence="1">
    <location>
        <position position="124"/>
    </location>
</feature>
<feature type="site" description="Hydrophobic membrane-disruption site (MDiS)" evidence="1">
    <location>
        <position position="127"/>
    </location>
</feature>
<feature type="site" description="Cationic membrane-docking site (MDoS)" evidence="1">
    <location>
        <position position="128"/>
    </location>
</feature>
<feature type="site" description="Hydrophobic membrane-disruption site (MDiS)" evidence="1">
    <location>
        <position position="130"/>
    </location>
</feature>
<feature type="site" description="Cationic membrane-docking site (MDoS)" evidence="1">
    <location>
        <position position="133"/>
    </location>
</feature>
<feature type="disulfide bond" evidence="3">
    <location>
        <begin position="42"/>
        <end position="131"/>
    </location>
</feature>
<feature type="disulfide bond" evidence="3">
    <location>
        <begin position="44"/>
        <end position="60"/>
    </location>
</feature>
<feature type="disulfide bond" evidence="3">
    <location>
        <begin position="59"/>
        <end position="111"/>
    </location>
</feature>
<feature type="disulfide bond" evidence="3">
    <location>
        <begin position="65"/>
        <end position="138"/>
    </location>
</feature>
<feature type="disulfide bond" evidence="3">
    <location>
        <begin position="66"/>
        <end position="104"/>
    </location>
</feature>
<feature type="disulfide bond" evidence="3">
    <location>
        <begin position="73"/>
        <end position="97"/>
    </location>
</feature>
<feature type="disulfide bond" evidence="3">
    <location>
        <begin position="91"/>
        <end position="102"/>
    </location>
</feature>
<dbReference type="EMBL" id="D31775">
    <property type="protein sequence ID" value="BAA06553.1"/>
    <property type="status" value="ALT_INIT"/>
    <property type="molecule type" value="mRNA"/>
</dbReference>
<dbReference type="EMBL" id="D31781">
    <property type="protein sequence ID" value="BAA06559.1"/>
    <property type="molecule type" value="Genomic_DNA"/>
</dbReference>
<dbReference type="SMR" id="P70090"/>
<dbReference type="GO" id="GO:0005576">
    <property type="term" value="C:extracellular region"/>
    <property type="evidence" value="ECO:0007669"/>
    <property type="project" value="UniProtKB-SubCell"/>
</dbReference>
<dbReference type="GO" id="GO:0005509">
    <property type="term" value="F:calcium ion binding"/>
    <property type="evidence" value="ECO:0007669"/>
    <property type="project" value="InterPro"/>
</dbReference>
<dbReference type="GO" id="GO:0047498">
    <property type="term" value="F:calcium-dependent phospholipase A2 activity"/>
    <property type="evidence" value="ECO:0007669"/>
    <property type="project" value="TreeGrafter"/>
</dbReference>
<dbReference type="GO" id="GO:0005543">
    <property type="term" value="F:phospholipid binding"/>
    <property type="evidence" value="ECO:0007669"/>
    <property type="project" value="TreeGrafter"/>
</dbReference>
<dbReference type="GO" id="GO:0090729">
    <property type="term" value="F:toxin activity"/>
    <property type="evidence" value="ECO:0007669"/>
    <property type="project" value="UniProtKB-KW"/>
</dbReference>
<dbReference type="GO" id="GO:0050482">
    <property type="term" value="P:arachidonate secretion"/>
    <property type="evidence" value="ECO:0007669"/>
    <property type="project" value="InterPro"/>
</dbReference>
<dbReference type="GO" id="GO:0016042">
    <property type="term" value="P:lipid catabolic process"/>
    <property type="evidence" value="ECO:0007669"/>
    <property type="project" value="InterPro"/>
</dbReference>
<dbReference type="GO" id="GO:0042130">
    <property type="term" value="P:negative regulation of T cell proliferation"/>
    <property type="evidence" value="ECO:0007669"/>
    <property type="project" value="TreeGrafter"/>
</dbReference>
<dbReference type="GO" id="GO:0006644">
    <property type="term" value="P:phospholipid metabolic process"/>
    <property type="evidence" value="ECO:0007669"/>
    <property type="project" value="InterPro"/>
</dbReference>
<dbReference type="CDD" id="cd00125">
    <property type="entry name" value="PLA2c"/>
    <property type="match status" value="1"/>
</dbReference>
<dbReference type="FunFam" id="1.20.90.10:FF:000001">
    <property type="entry name" value="Basic phospholipase A2 homolog"/>
    <property type="match status" value="1"/>
</dbReference>
<dbReference type="Gene3D" id="1.20.90.10">
    <property type="entry name" value="Phospholipase A2 domain"/>
    <property type="match status" value="1"/>
</dbReference>
<dbReference type="InterPro" id="IPR001211">
    <property type="entry name" value="PLipase_A2"/>
</dbReference>
<dbReference type="InterPro" id="IPR033112">
    <property type="entry name" value="PLipase_A2_Asp_AS"/>
</dbReference>
<dbReference type="InterPro" id="IPR016090">
    <property type="entry name" value="PLipase_A2_dom"/>
</dbReference>
<dbReference type="InterPro" id="IPR036444">
    <property type="entry name" value="PLipase_A2_dom_sf"/>
</dbReference>
<dbReference type="InterPro" id="IPR033113">
    <property type="entry name" value="PLipase_A2_His_AS"/>
</dbReference>
<dbReference type="PANTHER" id="PTHR11716">
    <property type="entry name" value="PHOSPHOLIPASE A2 FAMILY MEMBER"/>
    <property type="match status" value="1"/>
</dbReference>
<dbReference type="PANTHER" id="PTHR11716:SF9">
    <property type="entry name" value="PHOSPHOLIPASE A2, MEMBRANE ASSOCIATED"/>
    <property type="match status" value="1"/>
</dbReference>
<dbReference type="Pfam" id="PF00068">
    <property type="entry name" value="Phospholip_A2_1"/>
    <property type="match status" value="1"/>
</dbReference>
<dbReference type="PRINTS" id="PR00389">
    <property type="entry name" value="PHPHLIPASEA2"/>
</dbReference>
<dbReference type="SMART" id="SM00085">
    <property type="entry name" value="PA2c"/>
    <property type="match status" value="1"/>
</dbReference>
<dbReference type="SUPFAM" id="SSF48619">
    <property type="entry name" value="Phospholipase A2, PLA2"/>
    <property type="match status" value="1"/>
</dbReference>
<dbReference type="PROSITE" id="PS00119">
    <property type="entry name" value="PA2_ASP"/>
    <property type="match status" value="1"/>
</dbReference>
<dbReference type="PROSITE" id="PS00118">
    <property type="entry name" value="PA2_HIS"/>
    <property type="match status" value="1"/>
</dbReference>
<comment type="function">
    <text evidence="1 3">Snake venom phospholipase A2 homolog that lacks enzymatic activity (By similarity). Is myotoxic and displays edema-inducing activities (By similarity). A model of myotoxic mechanism has been proposed: an apo Lys49-PLA2 is activated by the entrance of a hydrophobic molecule (e.g. fatty acid) at the hydrophobic channel of the protein leading to a reorientation of a monomer (By similarity). This reorientation causes a transition between 'inactive' to 'active' states, causing alignment of C-terminal and membrane-docking sites (MDoS) side-by-side and putting the membrane-disruption sites (MDiS) in the same plane, exposed to solvent and in a symmetric position for both monomers (By similarity). The MDoS region stabilizes the toxin on membrane by the interaction of charged residues with phospholipid head groups (By similarity). Subsequently, the MDiS region destabilizes the membrane with penetration of hydrophobic residues (By similarity). This insertion causes a disorganization of the membrane, allowing an uncontrolled influx of ions (i.e. calcium and sodium), and eventually triggering irreversible intracellular alterations and cell death (By similarity).</text>
</comment>
<comment type="subcellular location">
    <subcellularLocation>
        <location evidence="4">Secreted</location>
    </subcellularLocation>
</comment>
<comment type="tissue specificity">
    <text evidence="7">Expressed by the venom gland.</text>
</comment>
<comment type="similarity">
    <text evidence="6">Belongs to the phospholipase A2 family. Group II subfamily. K49 sub-subfamily.</text>
</comment>
<comment type="caution">
    <text evidence="6">Does not bind calcium as one of the calcium-binding sites is lost (Asp-&gt;Lys in position 64, which corresponds to 'Lys-49' in the current nomenclature).</text>
</comment>
<comment type="sequence caution" evidence="6">
    <conflict type="erroneous initiation">
        <sequence resource="EMBL-CDS" id="BAA06553"/>
    </conflict>
    <text>Extended N-terminus.</text>
</comment>
<accession>P70090</accession>
<accession>P87482</accession>
<keyword id="KW-0903">Direct protein sequencing</keyword>
<keyword id="KW-1015">Disulfide bond</keyword>
<keyword id="KW-0959">Myotoxin</keyword>
<keyword id="KW-0964">Secreted</keyword>
<keyword id="KW-0732">Signal</keyword>
<keyword id="KW-0800">Toxin</keyword>
<name>PA2H5_CRAGM</name>
<organism>
    <name type="scientific">Craspedocephalus gramineus</name>
    <name type="common">Bamboo pit viper</name>
    <name type="synonym">Trimeresurus gramineus</name>
    <dbReference type="NCBI Taxonomy" id="8767"/>
    <lineage>
        <taxon>Eukaryota</taxon>
        <taxon>Metazoa</taxon>
        <taxon>Chordata</taxon>
        <taxon>Craniata</taxon>
        <taxon>Vertebrata</taxon>
        <taxon>Euteleostomi</taxon>
        <taxon>Lepidosauria</taxon>
        <taxon>Squamata</taxon>
        <taxon>Bifurcata</taxon>
        <taxon>Unidentata</taxon>
        <taxon>Episquamata</taxon>
        <taxon>Toxicofera</taxon>
        <taxon>Serpentes</taxon>
        <taxon>Colubroidea</taxon>
        <taxon>Viperidae</taxon>
        <taxon>Crotalinae</taxon>
        <taxon>Craspedocephalus</taxon>
    </lineage>
</organism>
<proteinExistence type="evidence at protein level"/>
<sequence length="138" mass="15690">MRTLWIMAVLLLGVEGSVIELGKMIFQETGKNPATSYGLYGCNCGPGGRRKPKDATDRCCYVHKCCYKKLTDCDPIKDRYSYSWVNKAIVCGEDNPCLKEMCECDKAVAICFRENLDTYDKKKKINLKLFCKKTSEQC</sequence>
<evidence type="ECO:0000250" key="1">
    <source>
        <dbReference type="UniProtKB" id="I6L8L6"/>
    </source>
</evidence>
<evidence type="ECO:0000250" key="2">
    <source>
        <dbReference type="UniProtKB" id="P24605"/>
    </source>
</evidence>
<evidence type="ECO:0000250" key="3">
    <source>
        <dbReference type="UniProtKB" id="Q90249"/>
    </source>
</evidence>
<evidence type="ECO:0000269" key="4">
    <source>
    </source>
</evidence>
<evidence type="ECO:0000269" key="5">
    <source>
    </source>
</evidence>
<evidence type="ECO:0000305" key="6"/>
<evidence type="ECO:0000305" key="7">
    <source>
    </source>
</evidence>